<feature type="chain" id="PRO_0000253086" description="Putative membrane protein insertion efficiency factor">
    <location>
        <begin position="1"/>
        <end position="88"/>
    </location>
</feature>
<feature type="region of interest" description="Disordered" evidence="2">
    <location>
        <begin position="68"/>
        <end position="88"/>
    </location>
</feature>
<feature type="compositionally biased region" description="Basic and acidic residues" evidence="2">
    <location>
        <begin position="75"/>
        <end position="88"/>
    </location>
</feature>
<reference key="1">
    <citation type="submission" date="2006-05" db="EMBL/GenBank/DDBJ databases">
        <title>Complete sequence of chromosome 1 of Burkholderia cenocepacia AU 1054.</title>
        <authorList>
            <consortium name="US DOE Joint Genome Institute"/>
            <person name="Copeland A."/>
            <person name="Lucas S."/>
            <person name="Lapidus A."/>
            <person name="Barry K."/>
            <person name="Detter J.C."/>
            <person name="Glavina del Rio T."/>
            <person name="Hammon N."/>
            <person name="Israni S."/>
            <person name="Dalin E."/>
            <person name="Tice H."/>
            <person name="Pitluck S."/>
            <person name="Chain P."/>
            <person name="Malfatti S."/>
            <person name="Shin M."/>
            <person name="Vergez L."/>
            <person name="Schmutz J."/>
            <person name="Larimer F."/>
            <person name="Land M."/>
            <person name="Hauser L."/>
            <person name="Kyrpides N."/>
            <person name="Lykidis A."/>
            <person name="LiPuma J.J."/>
            <person name="Konstantinidis K."/>
            <person name="Tiedje J.M."/>
            <person name="Richardson P."/>
        </authorList>
    </citation>
    <scope>NUCLEOTIDE SEQUENCE [LARGE SCALE GENOMIC DNA]</scope>
    <source>
        <strain>AU 1054</strain>
    </source>
</reference>
<evidence type="ECO:0000255" key="1">
    <source>
        <dbReference type="HAMAP-Rule" id="MF_00386"/>
    </source>
</evidence>
<evidence type="ECO:0000256" key="2">
    <source>
        <dbReference type="SAM" id="MobiDB-lite"/>
    </source>
</evidence>
<proteinExistence type="inferred from homology"/>
<dbReference type="EMBL" id="CP000378">
    <property type="protein sequence ID" value="ABF77449.1"/>
    <property type="molecule type" value="Genomic_DNA"/>
</dbReference>
<dbReference type="HOGENOM" id="CLU_144811_2_2_4"/>
<dbReference type="GO" id="GO:0005886">
    <property type="term" value="C:plasma membrane"/>
    <property type="evidence" value="ECO:0007669"/>
    <property type="project" value="UniProtKB-SubCell"/>
</dbReference>
<dbReference type="HAMAP" id="MF_00386">
    <property type="entry name" value="UPF0161_YidD"/>
    <property type="match status" value="1"/>
</dbReference>
<dbReference type="InterPro" id="IPR002696">
    <property type="entry name" value="Membr_insert_effic_factor_YidD"/>
</dbReference>
<dbReference type="NCBIfam" id="TIGR00278">
    <property type="entry name" value="membrane protein insertion efficiency factor YidD"/>
    <property type="match status" value="1"/>
</dbReference>
<dbReference type="PANTHER" id="PTHR33383">
    <property type="entry name" value="MEMBRANE PROTEIN INSERTION EFFICIENCY FACTOR-RELATED"/>
    <property type="match status" value="1"/>
</dbReference>
<dbReference type="PANTHER" id="PTHR33383:SF1">
    <property type="entry name" value="MEMBRANE PROTEIN INSERTION EFFICIENCY FACTOR-RELATED"/>
    <property type="match status" value="1"/>
</dbReference>
<dbReference type="Pfam" id="PF01809">
    <property type="entry name" value="YidD"/>
    <property type="match status" value="1"/>
</dbReference>
<dbReference type="SMART" id="SM01234">
    <property type="entry name" value="Haemolytic"/>
    <property type="match status" value="1"/>
</dbReference>
<comment type="function">
    <text evidence="1">Could be involved in insertion of integral membrane proteins into the membrane.</text>
</comment>
<comment type="subcellular location">
    <subcellularLocation>
        <location evidence="1">Cell inner membrane</location>
        <topology evidence="1">Peripheral membrane protein</topology>
        <orientation evidence="1">Cytoplasmic side</orientation>
    </subcellularLocation>
</comment>
<comment type="similarity">
    <text evidence="1">Belongs to the UPF0161 family.</text>
</comment>
<accession>Q1BSF6</accession>
<organism>
    <name type="scientific">Burkholderia orbicola (strain AU 1054)</name>
    <dbReference type="NCBI Taxonomy" id="331271"/>
    <lineage>
        <taxon>Bacteria</taxon>
        <taxon>Pseudomonadati</taxon>
        <taxon>Pseudomonadota</taxon>
        <taxon>Betaproteobacteria</taxon>
        <taxon>Burkholderiales</taxon>
        <taxon>Burkholderiaceae</taxon>
        <taxon>Burkholderia</taxon>
        <taxon>Burkholderia cepacia complex</taxon>
        <taxon>Burkholderia orbicola</taxon>
    </lineage>
</organism>
<protein>
    <recommendedName>
        <fullName evidence="1">Putative membrane protein insertion efficiency factor</fullName>
    </recommendedName>
</protein>
<gene>
    <name type="ordered locus">Bcen_2550</name>
</gene>
<sequence>MKTVLIALLRFYKVAVSPMLGNRCRFYPSCSDYAREAIQYHGAARGTYLAVRRVCRCHPFSAGGVDLVPPPNSDTRARGEADARSHRL</sequence>
<keyword id="KW-0997">Cell inner membrane</keyword>
<keyword id="KW-1003">Cell membrane</keyword>
<keyword id="KW-0472">Membrane</keyword>
<name>YIDD_BURO1</name>